<organism>
    <name type="scientific">Burkholderia orbicola (strain MC0-3)</name>
    <dbReference type="NCBI Taxonomy" id="406425"/>
    <lineage>
        <taxon>Bacteria</taxon>
        <taxon>Pseudomonadati</taxon>
        <taxon>Pseudomonadota</taxon>
        <taxon>Betaproteobacteria</taxon>
        <taxon>Burkholderiales</taxon>
        <taxon>Burkholderiaceae</taxon>
        <taxon>Burkholderia</taxon>
        <taxon>Burkholderia cepacia complex</taxon>
        <taxon>Burkholderia orbicola</taxon>
    </lineage>
</organism>
<reference key="1">
    <citation type="submission" date="2008-02" db="EMBL/GenBank/DDBJ databases">
        <title>Complete sequence of chromosome 1 of Burkholderia cenocepacia MC0-3.</title>
        <authorList>
            <person name="Copeland A."/>
            <person name="Lucas S."/>
            <person name="Lapidus A."/>
            <person name="Barry K."/>
            <person name="Bruce D."/>
            <person name="Goodwin L."/>
            <person name="Glavina del Rio T."/>
            <person name="Dalin E."/>
            <person name="Tice H."/>
            <person name="Pitluck S."/>
            <person name="Chain P."/>
            <person name="Malfatti S."/>
            <person name="Shin M."/>
            <person name="Vergez L."/>
            <person name="Schmutz J."/>
            <person name="Larimer F."/>
            <person name="Land M."/>
            <person name="Hauser L."/>
            <person name="Kyrpides N."/>
            <person name="Mikhailova N."/>
            <person name="Tiedje J."/>
            <person name="Richardson P."/>
        </authorList>
    </citation>
    <scope>NUCLEOTIDE SEQUENCE [LARGE SCALE GENOMIC DNA]</scope>
    <source>
        <strain>MC0-3</strain>
    </source>
</reference>
<dbReference type="EC" id="2.1.1.222" evidence="1"/>
<dbReference type="EC" id="2.1.1.64" evidence="1"/>
<dbReference type="EMBL" id="CP000958">
    <property type="protein sequence ID" value="ACA90174.1"/>
    <property type="molecule type" value="Genomic_DNA"/>
</dbReference>
<dbReference type="RefSeq" id="WP_006476580.1">
    <property type="nucleotide sequence ID" value="NC_010508.1"/>
</dbReference>
<dbReference type="SMR" id="B1JXR2"/>
<dbReference type="GeneID" id="83047790"/>
<dbReference type="KEGG" id="bcm:Bcenmc03_0997"/>
<dbReference type="HOGENOM" id="CLU_042432_5_0_4"/>
<dbReference type="UniPathway" id="UPA00232"/>
<dbReference type="Proteomes" id="UP000002169">
    <property type="component" value="Chromosome 1"/>
</dbReference>
<dbReference type="GO" id="GO:0102208">
    <property type="term" value="F:2-polyprenyl-6-hydroxyphenol methylase activity"/>
    <property type="evidence" value="ECO:0007669"/>
    <property type="project" value="UniProtKB-EC"/>
</dbReference>
<dbReference type="GO" id="GO:0061542">
    <property type="term" value="F:3-demethylubiquinol 3-O-methyltransferase activity"/>
    <property type="evidence" value="ECO:0007669"/>
    <property type="project" value="UniProtKB-UniRule"/>
</dbReference>
<dbReference type="GO" id="GO:0010420">
    <property type="term" value="F:polyprenyldihydroxybenzoate methyltransferase activity"/>
    <property type="evidence" value="ECO:0007669"/>
    <property type="project" value="InterPro"/>
</dbReference>
<dbReference type="GO" id="GO:0032259">
    <property type="term" value="P:methylation"/>
    <property type="evidence" value="ECO:0007669"/>
    <property type="project" value="UniProtKB-KW"/>
</dbReference>
<dbReference type="CDD" id="cd02440">
    <property type="entry name" value="AdoMet_MTases"/>
    <property type="match status" value="1"/>
</dbReference>
<dbReference type="FunFam" id="3.40.50.150:FF:000028">
    <property type="entry name" value="Ubiquinone biosynthesis O-methyltransferase"/>
    <property type="match status" value="1"/>
</dbReference>
<dbReference type="Gene3D" id="3.40.50.150">
    <property type="entry name" value="Vaccinia Virus protein VP39"/>
    <property type="match status" value="1"/>
</dbReference>
<dbReference type="HAMAP" id="MF_00472">
    <property type="entry name" value="UbiG"/>
    <property type="match status" value="1"/>
</dbReference>
<dbReference type="InterPro" id="IPR029063">
    <property type="entry name" value="SAM-dependent_MTases_sf"/>
</dbReference>
<dbReference type="InterPro" id="IPR010233">
    <property type="entry name" value="UbiG_MeTrfase"/>
</dbReference>
<dbReference type="NCBIfam" id="TIGR01983">
    <property type="entry name" value="UbiG"/>
    <property type="match status" value="1"/>
</dbReference>
<dbReference type="PANTHER" id="PTHR43464">
    <property type="entry name" value="METHYLTRANSFERASE"/>
    <property type="match status" value="1"/>
</dbReference>
<dbReference type="PANTHER" id="PTHR43464:SF19">
    <property type="entry name" value="UBIQUINONE BIOSYNTHESIS O-METHYLTRANSFERASE, MITOCHONDRIAL"/>
    <property type="match status" value="1"/>
</dbReference>
<dbReference type="Pfam" id="PF13489">
    <property type="entry name" value="Methyltransf_23"/>
    <property type="match status" value="1"/>
</dbReference>
<dbReference type="SUPFAM" id="SSF53335">
    <property type="entry name" value="S-adenosyl-L-methionine-dependent methyltransferases"/>
    <property type="match status" value="1"/>
</dbReference>
<feature type="chain" id="PRO_1000199670" description="Ubiquinone biosynthesis O-methyltransferase">
    <location>
        <begin position="1"/>
        <end position="232"/>
    </location>
</feature>
<feature type="binding site" evidence="1">
    <location>
        <position position="36"/>
    </location>
    <ligand>
        <name>S-adenosyl-L-methionine</name>
        <dbReference type="ChEBI" id="CHEBI:59789"/>
    </ligand>
</feature>
<feature type="binding site" evidence="1">
    <location>
        <position position="55"/>
    </location>
    <ligand>
        <name>S-adenosyl-L-methionine</name>
        <dbReference type="ChEBI" id="CHEBI:59789"/>
    </ligand>
</feature>
<feature type="binding site" evidence="1">
    <location>
        <position position="76"/>
    </location>
    <ligand>
        <name>S-adenosyl-L-methionine</name>
        <dbReference type="ChEBI" id="CHEBI:59789"/>
    </ligand>
</feature>
<feature type="binding site" evidence="1">
    <location>
        <position position="120"/>
    </location>
    <ligand>
        <name>S-adenosyl-L-methionine</name>
        <dbReference type="ChEBI" id="CHEBI:59789"/>
    </ligand>
</feature>
<gene>
    <name evidence="1" type="primary">ubiG</name>
    <name type="ordered locus">Bcenmc03_0997</name>
</gene>
<protein>
    <recommendedName>
        <fullName evidence="1">Ubiquinone biosynthesis O-methyltransferase</fullName>
    </recommendedName>
    <alternativeName>
        <fullName evidence="1">2-polyprenyl-6-hydroxyphenol methylase</fullName>
        <ecNumber evidence="1">2.1.1.222</ecNumber>
    </alternativeName>
    <alternativeName>
        <fullName evidence="1">3-demethylubiquinone 3-O-methyltransferase</fullName>
        <ecNumber evidence="1">2.1.1.64</ecNumber>
    </alternativeName>
</protein>
<accession>B1JXR2</accession>
<sequence length="232" mass="25211">MTNADPHELQKFSDLAHRWWDPNAEFKPLHDLNPVRLGWIDAHAHLAGKRALDIGCGGGILSESMAGLGAQVKGIDLSTEALGVADLHSLESGISVEYEAIAAEAIAAREPGTYDVVTCMEMLEHVPSPGDIVAACATLVKPGGWVFFSTLNRNLKSYLFAVIGAEYIAQMLPKGTHDYARFIRPSELASFVRATDLHIVEIKGITYHPIGKRFALSNDTDINYLVACRRGA</sequence>
<name>UBIG_BURO0</name>
<keyword id="KW-0489">Methyltransferase</keyword>
<keyword id="KW-0949">S-adenosyl-L-methionine</keyword>
<keyword id="KW-0808">Transferase</keyword>
<keyword id="KW-0831">Ubiquinone biosynthesis</keyword>
<proteinExistence type="inferred from homology"/>
<evidence type="ECO:0000255" key="1">
    <source>
        <dbReference type="HAMAP-Rule" id="MF_00472"/>
    </source>
</evidence>
<comment type="function">
    <text evidence="1">O-methyltransferase that catalyzes the 2 O-methylation steps in the ubiquinone biosynthetic pathway.</text>
</comment>
<comment type="catalytic activity">
    <reaction evidence="1">
        <text>a 3-demethylubiquinol + S-adenosyl-L-methionine = a ubiquinol + S-adenosyl-L-homocysteine + H(+)</text>
        <dbReference type="Rhea" id="RHEA:44380"/>
        <dbReference type="Rhea" id="RHEA-COMP:9566"/>
        <dbReference type="Rhea" id="RHEA-COMP:10914"/>
        <dbReference type="ChEBI" id="CHEBI:15378"/>
        <dbReference type="ChEBI" id="CHEBI:17976"/>
        <dbReference type="ChEBI" id="CHEBI:57856"/>
        <dbReference type="ChEBI" id="CHEBI:59789"/>
        <dbReference type="ChEBI" id="CHEBI:84422"/>
        <dbReference type="EC" id="2.1.1.64"/>
    </reaction>
</comment>
<comment type="catalytic activity">
    <reaction evidence="1">
        <text>a 3-(all-trans-polyprenyl)benzene-1,2-diol + S-adenosyl-L-methionine = a 2-methoxy-6-(all-trans-polyprenyl)phenol + S-adenosyl-L-homocysteine + H(+)</text>
        <dbReference type="Rhea" id="RHEA:31411"/>
        <dbReference type="Rhea" id="RHEA-COMP:9550"/>
        <dbReference type="Rhea" id="RHEA-COMP:9551"/>
        <dbReference type="ChEBI" id="CHEBI:15378"/>
        <dbReference type="ChEBI" id="CHEBI:57856"/>
        <dbReference type="ChEBI" id="CHEBI:59789"/>
        <dbReference type="ChEBI" id="CHEBI:62729"/>
        <dbReference type="ChEBI" id="CHEBI:62731"/>
        <dbReference type="EC" id="2.1.1.222"/>
    </reaction>
</comment>
<comment type="pathway">
    <text evidence="1">Cofactor biosynthesis; ubiquinone biosynthesis.</text>
</comment>
<comment type="similarity">
    <text evidence="1">Belongs to the methyltransferase superfamily. UbiG/COQ3 family.</text>
</comment>